<dbReference type="EC" id="5.3.1.16" evidence="1"/>
<dbReference type="EMBL" id="AP007255">
    <property type="protein sequence ID" value="BAE53336.1"/>
    <property type="molecule type" value="Genomic_DNA"/>
</dbReference>
<dbReference type="RefSeq" id="WP_011386876.1">
    <property type="nucleotide sequence ID" value="NC_007626.1"/>
</dbReference>
<dbReference type="SMR" id="Q2VYI9"/>
<dbReference type="STRING" id="342108.amb4532"/>
<dbReference type="KEGG" id="mag:amb4532"/>
<dbReference type="HOGENOM" id="CLU_048577_1_1_5"/>
<dbReference type="OrthoDB" id="9807749at2"/>
<dbReference type="UniPathway" id="UPA00031">
    <property type="reaction ID" value="UER00009"/>
</dbReference>
<dbReference type="Proteomes" id="UP000007058">
    <property type="component" value="Chromosome"/>
</dbReference>
<dbReference type="GO" id="GO:0005737">
    <property type="term" value="C:cytoplasm"/>
    <property type="evidence" value="ECO:0007669"/>
    <property type="project" value="UniProtKB-SubCell"/>
</dbReference>
<dbReference type="GO" id="GO:0003949">
    <property type="term" value="F:1-(5-phosphoribosyl)-5-[(5-phosphoribosylamino)methylideneamino]imidazole-4-carboxamide isomerase activity"/>
    <property type="evidence" value="ECO:0007669"/>
    <property type="project" value="UniProtKB-UniRule"/>
</dbReference>
<dbReference type="GO" id="GO:0000105">
    <property type="term" value="P:L-histidine biosynthetic process"/>
    <property type="evidence" value="ECO:0007669"/>
    <property type="project" value="UniProtKB-UniRule"/>
</dbReference>
<dbReference type="GO" id="GO:0000162">
    <property type="term" value="P:L-tryptophan biosynthetic process"/>
    <property type="evidence" value="ECO:0007669"/>
    <property type="project" value="TreeGrafter"/>
</dbReference>
<dbReference type="CDD" id="cd04732">
    <property type="entry name" value="HisA"/>
    <property type="match status" value="1"/>
</dbReference>
<dbReference type="FunFam" id="3.20.20.70:FF:000009">
    <property type="entry name" value="1-(5-phosphoribosyl)-5-[(5-phosphoribosylamino)methylideneamino] imidazole-4-carboxamide isomerase"/>
    <property type="match status" value="1"/>
</dbReference>
<dbReference type="Gene3D" id="3.20.20.70">
    <property type="entry name" value="Aldolase class I"/>
    <property type="match status" value="1"/>
</dbReference>
<dbReference type="HAMAP" id="MF_01014">
    <property type="entry name" value="HisA"/>
    <property type="match status" value="1"/>
</dbReference>
<dbReference type="InterPro" id="IPR013785">
    <property type="entry name" value="Aldolase_TIM"/>
</dbReference>
<dbReference type="InterPro" id="IPR006062">
    <property type="entry name" value="His_biosynth"/>
</dbReference>
<dbReference type="InterPro" id="IPR006063">
    <property type="entry name" value="HisA_bact_arch"/>
</dbReference>
<dbReference type="InterPro" id="IPR044524">
    <property type="entry name" value="Isoase_HisA-like"/>
</dbReference>
<dbReference type="InterPro" id="IPR023016">
    <property type="entry name" value="Isoase_HisA-like_bact"/>
</dbReference>
<dbReference type="InterPro" id="IPR011060">
    <property type="entry name" value="RibuloseP-bd_barrel"/>
</dbReference>
<dbReference type="NCBIfam" id="TIGR00007">
    <property type="entry name" value="1-(5-phosphoribosyl)-5-[(5-phosphoribosylamino)methylideneamino]imidazole-4-carboxamide isomerase"/>
    <property type="match status" value="1"/>
</dbReference>
<dbReference type="PANTHER" id="PTHR43090">
    <property type="entry name" value="1-(5-PHOSPHORIBOSYL)-5-[(5-PHOSPHORIBOSYLAMINO)METHYLIDENEAMINO] IMIDAZOLE-4-CARBOXAMIDE ISOMERASE"/>
    <property type="match status" value="1"/>
</dbReference>
<dbReference type="PANTHER" id="PTHR43090:SF2">
    <property type="entry name" value="1-(5-PHOSPHORIBOSYL)-5-[(5-PHOSPHORIBOSYLAMINO)METHYLIDENEAMINO] IMIDAZOLE-4-CARBOXAMIDE ISOMERASE"/>
    <property type="match status" value="1"/>
</dbReference>
<dbReference type="Pfam" id="PF00977">
    <property type="entry name" value="His_biosynth"/>
    <property type="match status" value="1"/>
</dbReference>
<dbReference type="SUPFAM" id="SSF51366">
    <property type="entry name" value="Ribulose-phoshate binding barrel"/>
    <property type="match status" value="1"/>
</dbReference>
<keyword id="KW-0028">Amino-acid biosynthesis</keyword>
<keyword id="KW-0963">Cytoplasm</keyword>
<keyword id="KW-0368">Histidine biosynthesis</keyword>
<keyword id="KW-0413">Isomerase</keyword>
<gene>
    <name evidence="1" type="primary">hisA</name>
    <name type="ordered locus">amb4532</name>
</gene>
<proteinExistence type="inferred from homology"/>
<organism>
    <name type="scientific">Paramagnetospirillum magneticum (strain ATCC 700264 / AMB-1)</name>
    <name type="common">Magnetospirillum magneticum</name>
    <dbReference type="NCBI Taxonomy" id="342108"/>
    <lineage>
        <taxon>Bacteria</taxon>
        <taxon>Pseudomonadati</taxon>
        <taxon>Pseudomonadota</taxon>
        <taxon>Alphaproteobacteria</taxon>
        <taxon>Rhodospirillales</taxon>
        <taxon>Magnetospirillaceae</taxon>
        <taxon>Paramagnetospirillum</taxon>
    </lineage>
</organism>
<reference key="1">
    <citation type="journal article" date="2005" name="DNA Res.">
        <title>Complete genome sequence of the facultative anaerobic magnetotactic bacterium Magnetospirillum sp. strain AMB-1.</title>
        <authorList>
            <person name="Matsunaga T."/>
            <person name="Okamura Y."/>
            <person name="Fukuda Y."/>
            <person name="Wahyudi A.T."/>
            <person name="Murase Y."/>
            <person name="Takeyama H."/>
        </authorList>
    </citation>
    <scope>NUCLEOTIDE SEQUENCE [LARGE SCALE GENOMIC DNA]</scope>
    <source>
        <strain>ATCC 700264 / AMB-1</strain>
    </source>
</reference>
<protein>
    <recommendedName>
        <fullName evidence="1">1-(5-phosphoribosyl)-5-[(5-phosphoribosylamino)methylideneamino] imidazole-4-carboxamide isomerase</fullName>
        <ecNumber evidence="1">5.3.1.16</ecNumber>
    </recommendedName>
    <alternativeName>
        <fullName evidence="1">Phosphoribosylformimino-5-aminoimidazole carboxamide ribotide isomerase</fullName>
    </alternativeName>
</protein>
<feature type="chain" id="PRO_0000290491" description="1-(5-phosphoribosyl)-5-[(5-phosphoribosylamino)methylideneamino] imidazole-4-carboxamide isomerase">
    <location>
        <begin position="1"/>
        <end position="239"/>
    </location>
</feature>
<feature type="active site" description="Proton acceptor" evidence="1">
    <location>
        <position position="8"/>
    </location>
</feature>
<feature type="active site" description="Proton donor" evidence="1">
    <location>
        <position position="129"/>
    </location>
</feature>
<sequence>MFLFPAIDLKDGACVRLKLGLMEESTVFNTDPGAQARDFAAAGAEWIHVVDLNGAFAGKPVNGAAVDSILKSVSVPVQLGGGIREMATIEDWLARGIRRVILGTVALKNPALVKEACQRFPGRVAVGIDAKGGKVAVEGWAETSDLTVLELARKFEDCGVAALIYTDIDRDGVLAGPNVAATAALADAISIPVIASGGVSSLVDLKALKAYPKLEGVISGRAIYDGRIDVAQAIALLKA</sequence>
<evidence type="ECO:0000255" key="1">
    <source>
        <dbReference type="HAMAP-Rule" id="MF_01014"/>
    </source>
</evidence>
<comment type="catalytic activity">
    <reaction evidence="1">
        <text>1-(5-phospho-beta-D-ribosyl)-5-[(5-phospho-beta-D-ribosylamino)methylideneamino]imidazole-4-carboxamide = 5-[(5-phospho-1-deoxy-D-ribulos-1-ylimino)methylamino]-1-(5-phospho-beta-D-ribosyl)imidazole-4-carboxamide</text>
        <dbReference type="Rhea" id="RHEA:15469"/>
        <dbReference type="ChEBI" id="CHEBI:58435"/>
        <dbReference type="ChEBI" id="CHEBI:58525"/>
        <dbReference type="EC" id="5.3.1.16"/>
    </reaction>
</comment>
<comment type="pathway">
    <text evidence="1">Amino-acid biosynthesis; L-histidine biosynthesis; L-histidine from 5-phospho-alpha-D-ribose 1-diphosphate: step 4/9.</text>
</comment>
<comment type="subcellular location">
    <subcellularLocation>
        <location evidence="1">Cytoplasm</location>
    </subcellularLocation>
</comment>
<comment type="similarity">
    <text evidence="1">Belongs to the HisA/HisF family.</text>
</comment>
<name>HIS4_PARM1</name>
<accession>Q2VYI9</accession>